<feature type="chain" id="PRO_0000205616" description="Uncharacterized GMC-type oxidoreductase Rv1279">
    <location>
        <begin position="1"/>
        <end position="528"/>
    </location>
</feature>
<feature type="active site" description="Proton acceptor" evidence="2">
    <location>
        <position position="468"/>
    </location>
</feature>
<feature type="binding site" evidence="3">
    <location>
        <begin position="6"/>
        <end position="35"/>
    </location>
    <ligand>
        <name>FAD</name>
        <dbReference type="ChEBI" id="CHEBI:57692"/>
    </ligand>
</feature>
<gene>
    <name type="ordered locus">Rv1279</name>
    <name type="ORF">MTCY50.03c</name>
</gene>
<keyword id="KW-0274">FAD</keyword>
<keyword id="KW-0285">Flavoprotein</keyword>
<keyword id="KW-0560">Oxidoreductase</keyword>
<keyword id="KW-1185">Reference proteome</keyword>
<organism>
    <name type="scientific">Mycobacterium tuberculosis (strain ATCC 25618 / H37Rv)</name>
    <dbReference type="NCBI Taxonomy" id="83332"/>
    <lineage>
        <taxon>Bacteria</taxon>
        <taxon>Bacillati</taxon>
        <taxon>Actinomycetota</taxon>
        <taxon>Actinomycetes</taxon>
        <taxon>Mycobacteriales</taxon>
        <taxon>Mycobacteriaceae</taxon>
        <taxon>Mycobacterium</taxon>
        <taxon>Mycobacterium tuberculosis complex</taxon>
    </lineage>
</organism>
<proteinExistence type="evidence at protein level"/>
<evidence type="ECO:0000250" key="1"/>
<evidence type="ECO:0000250" key="2">
    <source>
        <dbReference type="UniProtKB" id="E4QP00"/>
    </source>
</evidence>
<evidence type="ECO:0000255" key="3"/>
<evidence type="ECO:0000305" key="4"/>
<dbReference type="EC" id="1.1.-.-"/>
<dbReference type="EMBL" id="AL123456">
    <property type="protein sequence ID" value="CCP44035.1"/>
    <property type="molecule type" value="Genomic_DNA"/>
</dbReference>
<dbReference type="PIR" id="G70755">
    <property type="entry name" value="G70755"/>
</dbReference>
<dbReference type="RefSeq" id="NP_215795.1">
    <property type="nucleotide sequence ID" value="NC_000962.3"/>
</dbReference>
<dbReference type="RefSeq" id="WP_003406598.1">
    <property type="nucleotide sequence ID" value="NZ_NVQJ01000030.1"/>
</dbReference>
<dbReference type="SMR" id="P9WMV5"/>
<dbReference type="FunCoup" id="P9WMV5">
    <property type="interactions" value="122"/>
</dbReference>
<dbReference type="STRING" id="83332.Rv1279"/>
<dbReference type="PaxDb" id="83332-Rv1279"/>
<dbReference type="DNASU" id="887002"/>
<dbReference type="GeneID" id="887002"/>
<dbReference type="KEGG" id="mtu:Rv1279"/>
<dbReference type="KEGG" id="mtv:RVBD_1279"/>
<dbReference type="TubercuList" id="Rv1279"/>
<dbReference type="eggNOG" id="COG2303">
    <property type="taxonomic scope" value="Bacteria"/>
</dbReference>
<dbReference type="InParanoid" id="P9WMV5"/>
<dbReference type="OrthoDB" id="9785276at2"/>
<dbReference type="PhylomeDB" id="P9WMV5"/>
<dbReference type="Proteomes" id="UP000001584">
    <property type="component" value="Chromosome"/>
</dbReference>
<dbReference type="GO" id="GO:0005829">
    <property type="term" value="C:cytosol"/>
    <property type="evidence" value="ECO:0007005"/>
    <property type="project" value="MTBBASE"/>
</dbReference>
<dbReference type="GO" id="GO:0009274">
    <property type="term" value="C:peptidoglycan-based cell wall"/>
    <property type="evidence" value="ECO:0007005"/>
    <property type="project" value="MTBBASE"/>
</dbReference>
<dbReference type="GO" id="GO:0005886">
    <property type="term" value="C:plasma membrane"/>
    <property type="evidence" value="ECO:0007005"/>
    <property type="project" value="MTBBASE"/>
</dbReference>
<dbReference type="GO" id="GO:0050660">
    <property type="term" value="F:flavin adenine dinucleotide binding"/>
    <property type="evidence" value="ECO:0007669"/>
    <property type="project" value="InterPro"/>
</dbReference>
<dbReference type="GO" id="GO:0016614">
    <property type="term" value="F:oxidoreductase activity, acting on CH-OH group of donors"/>
    <property type="evidence" value="ECO:0007669"/>
    <property type="project" value="InterPro"/>
</dbReference>
<dbReference type="Gene3D" id="3.50.50.60">
    <property type="entry name" value="FAD/NAD(P)-binding domain"/>
    <property type="match status" value="1"/>
</dbReference>
<dbReference type="Gene3D" id="3.30.560.10">
    <property type="entry name" value="Glucose Oxidase, domain 3"/>
    <property type="match status" value="1"/>
</dbReference>
<dbReference type="InterPro" id="IPR036188">
    <property type="entry name" value="FAD/NAD-bd_sf"/>
</dbReference>
<dbReference type="InterPro" id="IPR012132">
    <property type="entry name" value="GMC_OxRdtase"/>
</dbReference>
<dbReference type="InterPro" id="IPR000172">
    <property type="entry name" value="GMC_OxRdtase_N"/>
</dbReference>
<dbReference type="InterPro" id="IPR007867">
    <property type="entry name" value="GMC_OxRtase_C"/>
</dbReference>
<dbReference type="PANTHER" id="PTHR11552:SF147">
    <property type="entry name" value="CHOLINE DEHYDROGENASE, MITOCHONDRIAL"/>
    <property type="match status" value="1"/>
</dbReference>
<dbReference type="PANTHER" id="PTHR11552">
    <property type="entry name" value="GLUCOSE-METHANOL-CHOLINE GMC OXIDOREDUCTASE"/>
    <property type="match status" value="1"/>
</dbReference>
<dbReference type="Pfam" id="PF05199">
    <property type="entry name" value="GMC_oxred_C"/>
    <property type="match status" value="1"/>
</dbReference>
<dbReference type="Pfam" id="PF00732">
    <property type="entry name" value="GMC_oxred_N"/>
    <property type="match status" value="1"/>
</dbReference>
<dbReference type="PIRSF" id="PIRSF000137">
    <property type="entry name" value="Alcohol_oxidase"/>
    <property type="match status" value="1"/>
</dbReference>
<dbReference type="SUPFAM" id="SSF54373">
    <property type="entry name" value="FAD-linked reductases, C-terminal domain"/>
    <property type="match status" value="1"/>
</dbReference>
<dbReference type="SUPFAM" id="SSF51905">
    <property type="entry name" value="FAD/NAD(P)-binding domain"/>
    <property type="match status" value="1"/>
</dbReference>
<dbReference type="PROSITE" id="PS00623">
    <property type="entry name" value="GMC_OXRED_1"/>
    <property type="match status" value="1"/>
</dbReference>
<dbReference type="PROSITE" id="PS00624">
    <property type="entry name" value="GMC_OXRED_2"/>
    <property type="match status" value="1"/>
</dbReference>
<comment type="cofactor">
    <cofactor evidence="1">
        <name>FAD</name>
        <dbReference type="ChEBI" id="CHEBI:57692"/>
    </cofactor>
</comment>
<comment type="similarity">
    <text evidence="4">Belongs to the GMC oxidoreductase family.</text>
</comment>
<sequence length="528" mass="57331">MDTQSDYVVVGTGSAGAVVASRLSTDPATTVVALEAGPRDKNRFIGVPAAFSKLFRSEIDWDYLTEPQPELDGREIYWPRGKVLGGSSSMNAMMWVRGFASDYDEWAARAGPRWSYADVLGYFRRIENVTAAWHFVSGDDSGVTGPLHISRQRSPRSVTAAWLAAARECGFAAARPNSPRPEGFCETVVTQRRGARFSTADAYLKPAMRRKNLRVLTGATATRVVIDGDRAVGVEYQSDGQTRIVYARREVVLCAGAVNSPQLLMLSGIGDRDHLAEHDIDTVYHAPEVGCNLLDHLVTVLGFDVEKDSLFAAEKPGQLISYLLRRRGMLTSNVGEAYGFVRSRPELKLPDLELIFAPAPFYDEALVPPAGHGVVFGPILVAPQSRGQITLRSADPHAKPVIEPRYLSDLGGVDRAAMMAGLRICARIAQARPLRDLLGSIARPRNSTELDEATLELALATCSHTLYHPMGTCRMGSDEASVVDPQLRVRGVDGLRVADASVMPSTVRGHTHAPSVLIGEKAADLIRS</sequence>
<protein>
    <recommendedName>
        <fullName>Uncharacterized GMC-type oxidoreductase Rv1279</fullName>
        <ecNumber>1.1.-.-</ecNumber>
    </recommendedName>
</protein>
<name>Y1279_MYCTU</name>
<accession>P9WMV5</accession>
<accession>L0T7T5</accession>
<accession>P64263</accession>
<accession>Q11038</accession>
<reference key="1">
    <citation type="journal article" date="1998" name="Nature">
        <title>Deciphering the biology of Mycobacterium tuberculosis from the complete genome sequence.</title>
        <authorList>
            <person name="Cole S.T."/>
            <person name="Brosch R."/>
            <person name="Parkhill J."/>
            <person name="Garnier T."/>
            <person name="Churcher C.M."/>
            <person name="Harris D.E."/>
            <person name="Gordon S.V."/>
            <person name="Eiglmeier K."/>
            <person name="Gas S."/>
            <person name="Barry C.E. III"/>
            <person name="Tekaia F."/>
            <person name="Badcock K."/>
            <person name="Basham D."/>
            <person name="Brown D."/>
            <person name="Chillingworth T."/>
            <person name="Connor R."/>
            <person name="Davies R.M."/>
            <person name="Devlin K."/>
            <person name="Feltwell T."/>
            <person name="Gentles S."/>
            <person name="Hamlin N."/>
            <person name="Holroyd S."/>
            <person name="Hornsby T."/>
            <person name="Jagels K."/>
            <person name="Krogh A."/>
            <person name="McLean J."/>
            <person name="Moule S."/>
            <person name="Murphy L.D."/>
            <person name="Oliver S."/>
            <person name="Osborne J."/>
            <person name="Quail M.A."/>
            <person name="Rajandream M.A."/>
            <person name="Rogers J."/>
            <person name="Rutter S."/>
            <person name="Seeger K."/>
            <person name="Skelton S."/>
            <person name="Squares S."/>
            <person name="Squares R."/>
            <person name="Sulston J.E."/>
            <person name="Taylor K."/>
            <person name="Whitehead S."/>
            <person name="Barrell B.G."/>
        </authorList>
    </citation>
    <scope>NUCLEOTIDE SEQUENCE [LARGE SCALE GENOMIC DNA]</scope>
    <source>
        <strain>ATCC 25618 / H37Rv</strain>
    </source>
</reference>
<reference key="2">
    <citation type="journal article" date="2011" name="Mol. Cell. Proteomics">
        <title>Proteogenomic analysis of Mycobacterium tuberculosis by high resolution mass spectrometry.</title>
        <authorList>
            <person name="Kelkar D.S."/>
            <person name="Kumar D."/>
            <person name="Kumar P."/>
            <person name="Balakrishnan L."/>
            <person name="Muthusamy B."/>
            <person name="Yadav A.K."/>
            <person name="Shrivastava P."/>
            <person name="Marimuthu A."/>
            <person name="Anand S."/>
            <person name="Sundaram H."/>
            <person name="Kingsbury R."/>
            <person name="Harsha H.C."/>
            <person name="Nair B."/>
            <person name="Prasad T.S."/>
            <person name="Chauhan D.S."/>
            <person name="Katoch K."/>
            <person name="Katoch V.M."/>
            <person name="Kumar P."/>
            <person name="Chaerkady R."/>
            <person name="Ramachandran S."/>
            <person name="Dash D."/>
            <person name="Pandey A."/>
        </authorList>
    </citation>
    <scope>IDENTIFICATION BY MASS SPECTROMETRY [LARGE SCALE ANALYSIS]</scope>
    <source>
        <strain>ATCC 25618 / H37Rv</strain>
    </source>
</reference>